<reference key="1">
    <citation type="journal article" date="2004" name="Nature">
        <title>Genome evolution in yeasts.</title>
        <authorList>
            <person name="Dujon B."/>
            <person name="Sherman D."/>
            <person name="Fischer G."/>
            <person name="Durrens P."/>
            <person name="Casaregola S."/>
            <person name="Lafontaine I."/>
            <person name="de Montigny J."/>
            <person name="Marck C."/>
            <person name="Neuveglise C."/>
            <person name="Talla E."/>
            <person name="Goffard N."/>
            <person name="Frangeul L."/>
            <person name="Aigle M."/>
            <person name="Anthouard V."/>
            <person name="Babour A."/>
            <person name="Barbe V."/>
            <person name="Barnay S."/>
            <person name="Blanchin S."/>
            <person name="Beckerich J.-M."/>
            <person name="Beyne E."/>
            <person name="Bleykasten C."/>
            <person name="Boisrame A."/>
            <person name="Boyer J."/>
            <person name="Cattolico L."/>
            <person name="Confanioleri F."/>
            <person name="de Daruvar A."/>
            <person name="Despons L."/>
            <person name="Fabre E."/>
            <person name="Fairhead C."/>
            <person name="Ferry-Dumazet H."/>
            <person name="Groppi A."/>
            <person name="Hantraye F."/>
            <person name="Hennequin C."/>
            <person name="Jauniaux N."/>
            <person name="Joyet P."/>
            <person name="Kachouri R."/>
            <person name="Kerrest A."/>
            <person name="Koszul R."/>
            <person name="Lemaire M."/>
            <person name="Lesur I."/>
            <person name="Ma L."/>
            <person name="Muller H."/>
            <person name="Nicaud J.-M."/>
            <person name="Nikolski M."/>
            <person name="Oztas S."/>
            <person name="Ozier-Kalogeropoulos O."/>
            <person name="Pellenz S."/>
            <person name="Potier S."/>
            <person name="Richard G.-F."/>
            <person name="Straub M.-L."/>
            <person name="Suleau A."/>
            <person name="Swennen D."/>
            <person name="Tekaia F."/>
            <person name="Wesolowski-Louvel M."/>
            <person name="Westhof E."/>
            <person name="Wirth B."/>
            <person name="Zeniou-Meyer M."/>
            <person name="Zivanovic Y."/>
            <person name="Bolotin-Fukuhara M."/>
            <person name="Thierry A."/>
            <person name="Bouchier C."/>
            <person name="Caudron B."/>
            <person name="Scarpelli C."/>
            <person name="Gaillardin C."/>
            <person name="Weissenbach J."/>
            <person name="Wincker P."/>
            <person name="Souciet J.-L."/>
        </authorList>
    </citation>
    <scope>NUCLEOTIDE SEQUENCE [LARGE SCALE GENOMIC DNA]</scope>
    <source>
        <strain>ATCC 8585 / CBS 2359 / DSM 70799 / NBRC 1267 / NRRL Y-1140 / WM37</strain>
    </source>
</reference>
<feature type="chain" id="PRO_0000167620" description="NADPH-dependent diflavin oxidoreductase 1">
    <location>
        <begin position="1"/>
        <end position="624"/>
    </location>
</feature>
<feature type="domain" description="Flavodoxin-like" evidence="1">
    <location>
        <begin position="6"/>
        <end position="168"/>
    </location>
</feature>
<feature type="domain" description="FAD-binding FR-type" evidence="1">
    <location>
        <begin position="226"/>
        <end position="474"/>
    </location>
</feature>
<feature type="binding site" evidence="1">
    <location>
        <begin position="12"/>
        <end position="17"/>
    </location>
    <ligand>
        <name>FMN</name>
        <dbReference type="ChEBI" id="CHEBI:58210"/>
    </ligand>
</feature>
<feature type="binding site" evidence="1">
    <location>
        <begin position="59"/>
        <end position="62"/>
    </location>
    <ligand>
        <name>FMN</name>
        <dbReference type="ChEBI" id="CHEBI:58210"/>
    </ligand>
</feature>
<feature type="binding site" evidence="1">
    <location>
        <begin position="106"/>
        <end position="115"/>
    </location>
    <ligand>
        <name>FMN</name>
        <dbReference type="ChEBI" id="CHEBI:58210"/>
    </ligand>
</feature>
<feature type="binding site" evidence="1">
    <location>
        <position position="142"/>
    </location>
    <ligand>
        <name>FMN</name>
        <dbReference type="ChEBI" id="CHEBI:58210"/>
    </ligand>
</feature>
<feature type="binding site" evidence="1">
    <location>
        <position position="384"/>
    </location>
    <ligand>
        <name>FAD</name>
        <dbReference type="ChEBI" id="CHEBI:57692"/>
    </ligand>
</feature>
<feature type="binding site" evidence="1">
    <location>
        <begin position="414"/>
        <end position="417"/>
    </location>
    <ligand>
        <name>FAD</name>
        <dbReference type="ChEBI" id="CHEBI:57692"/>
    </ligand>
</feature>
<feature type="binding site" evidence="1">
    <location>
        <begin position="446"/>
        <end position="449"/>
    </location>
    <ligand>
        <name>FAD</name>
        <dbReference type="ChEBI" id="CHEBI:57692"/>
    </ligand>
</feature>
<feature type="binding site" evidence="1">
    <location>
        <begin position="539"/>
        <end position="540"/>
    </location>
    <ligand>
        <name>NADP(+)</name>
        <dbReference type="ChEBI" id="CHEBI:58349"/>
    </ligand>
</feature>
<feature type="binding site" evidence="1">
    <location>
        <begin position="548"/>
        <end position="552"/>
    </location>
    <ligand>
        <name>NADP(+)</name>
        <dbReference type="ChEBI" id="CHEBI:58349"/>
    </ligand>
</feature>
<feature type="binding site" evidence="1">
    <location>
        <position position="624"/>
    </location>
    <ligand>
        <name>FAD</name>
        <dbReference type="ChEBI" id="CHEBI:57692"/>
    </ligand>
</feature>
<sequence>MQNKKIVILYGSETGNAQDFAHILSHKLKRLHFSHTLIKIGDYHPKSVLQCKYLFIICSTTGQGELPRNARENCNGRAQGTLWQFLKKSTLPADLLDHVNVAMLGLGDSSYPRFNFGIRKLHERIVNQLGASEIFPRLEADELGLAGSNKDTGNGVESVYYEFEKRIIAYMLEKYPNRKHDGKMMPRVGLAEDVYLKPSNILEISTVNGSTNDQLPDSKIQFVGDETIRHGTVKKNNQITAKDHFQDVRQFVFETEDHEAYHPGDTVSLYPENSDNDVELFLEAQPHWKKVADELLTITDLENCDRFRDGGVVKPLTLRTLLKYHFDIVSIPRQSFFMKTWTFANAHEDRPTDQELLEQQRDKLRQFGYGQDLQDLYDYCNRPRRSVLEVIQDFEFLKLPWEFALDYLPMIKPRFYSISSAPSDPNVELTIAIVRYKTLLRKVRKGLCTNYLLTLTENDTVRYKLQNNHLLHEDIIGKPIIMTSPGVGLAPMKCLIESNLFKDQYLFFGNRMKDKDFLYEDTLSMWKKEGKINLFTCFSRDPINSPHAKYVQDQLWNQSSLIADLILKKSAIVYICGSSGKMPVQVRLTIVEILKKHGNFENAEEAEHYLKEMERTDRYMQETW</sequence>
<name>NDOR1_KLULA</name>
<protein>
    <recommendedName>
        <fullName evidence="1">NADPH-dependent diflavin oxidoreductase 1</fullName>
        <ecNumber evidence="1">1.18.1.-</ecNumber>
    </recommendedName>
    <alternativeName>
        <fullName evidence="1">NADPH-dependent FMN and FAD-containing oxidoreductase</fullName>
    </alternativeName>
</protein>
<proteinExistence type="inferred from homology"/>
<keyword id="KW-0963">Cytoplasm</keyword>
<keyword id="KW-0274">FAD</keyword>
<keyword id="KW-0285">Flavoprotein</keyword>
<keyword id="KW-0288">FMN</keyword>
<keyword id="KW-0496">Mitochondrion</keyword>
<keyword id="KW-0521">NADP</keyword>
<keyword id="KW-0560">Oxidoreductase</keyword>
<keyword id="KW-1185">Reference proteome</keyword>
<gene>
    <name evidence="1" type="primary">TAH18</name>
    <name type="ordered locus">KLLA0B12155g</name>
</gene>
<dbReference type="EC" id="1.18.1.-" evidence="1"/>
<dbReference type="EMBL" id="CR382122">
    <property type="protein sequence ID" value="CAH02464.1"/>
    <property type="molecule type" value="Genomic_DNA"/>
</dbReference>
<dbReference type="RefSeq" id="XP_452071.1">
    <property type="nucleotide sequence ID" value="XM_452071.1"/>
</dbReference>
<dbReference type="SMR" id="Q6CVG8"/>
<dbReference type="FunCoup" id="Q6CVG8">
    <property type="interactions" value="773"/>
</dbReference>
<dbReference type="STRING" id="284590.Q6CVG8"/>
<dbReference type="PaxDb" id="284590-Q6CVG8"/>
<dbReference type="KEGG" id="kla:KLLA0_B12155g"/>
<dbReference type="eggNOG" id="KOG1159">
    <property type="taxonomic scope" value="Eukaryota"/>
</dbReference>
<dbReference type="HOGENOM" id="CLU_001570_17_6_1"/>
<dbReference type="InParanoid" id="Q6CVG8"/>
<dbReference type="OMA" id="DIMSIPR"/>
<dbReference type="Proteomes" id="UP000000598">
    <property type="component" value="Chromosome B"/>
</dbReference>
<dbReference type="GO" id="GO:0005829">
    <property type="term" value="C:cytosol"/>
    <property type="evidence" value="ECO:0007669"/>
    <property type="project" value="TreeGrafter"/>
</dbReference>
<dbReference type="GO" id="GO:0005739">
    <property type="term" value="C:mitochondrion"/>
    <property type="evidence" value="ECO:0007669"/>
    <property type="project" value="UniProtKB-SubCell"/>
</dbReference>
<dbReference type="GO" id="GO:0050660">
    <property type="term" value="F:flavin adenine dinucleotide binding"/>
    <property type="evidence" value="ECO:0007669"/>
    <property type="project" value="UniProtKB-UniRule"/>
</dbReference>
<dbReference type="GO" id="GO:0010181">
    <property type="term" value="F:FMN binding"/>
    <property type="evidence" value="ECO:0007669"/>
    <property type="project" value="UniProtKB-UniRule"/>
</dbReference>
<dbReference type="GO" id="GO:0050661">
    <property type="term" value="F:NADP binding"/>
    <property type="evidence" value="ECO:0007669"/>
    <property type="project" value="UniProtKB-UniRule"/>
</dbReference>
<dbReference type="GO" id="GO:0003958">
    <property type="term" value="F:NADPH-hemoprotein reductase activity"/>
    <property type="evidence" value="ECO:0007669"/>
    <property type="project" value="InterPro"/>
</dbReference>
<dbReference type="GO" id="GO:0016226">
    <property type="term" value="P:iron-sulfur cluster assembly"/>
    <property type="evidence" value="ECO:0007669"/>
    <property type="project" value="UniProtKB-UniRule"/>
</dbReference>
<dbReference type="FunFam" id="3.40.50.360:FF:000056">
    <property type="entry name" value="NADPH-dependent diflavin oxidoreductase 1"/>
    <property type="match status" value="1"/>
</dbReference>
<dbReference type="FunFam" id="3.40.50.80:FF:000030">
    <property type="entry name" value="NADPH-dependent diflavin oxidoreductase 1"/>
    <property type="match status" value="1"/>
</dbReference>
<dbReference type="Gene3D" id="3.40.50.360">
    <property type="match status" value="1"/>
</dbReference>
<dbReference type="Gene3D" id="1.20.990.10">
    <property type="entry name" value="NADPH-cytochrome p450 Reductase, Chain A, domain 3"/>
    <property type="match status" value="1"/>
</dbReference>
<dbReference type="Gene3D" id="3.40.50.80">
    <property type="entry name" value="Nucleotide-binding domain of ferredoxin-NADP reductase (FNR) module"/>
    <property type="match status" value="1"/>
</dbReference>
<dbReference type="Gene3D" id="2.40.30.10">
    <property type="entry name" value="Translation factors"/>
    <property type="match status" value="1"/>
</dbReference>
<dbReference type="HAMAP" id="MF_03178">
    <property type="entry name" value="NDOR1"/>
    <property type="match status" value="1"/>
</dbReference>
<dbReference type="InterPro" id="IPR003097">
    <property type="entry name" value="CysJ-like_FAD-binding"/>
</dbReference>
<dbReference type="InterPro" id="IPR017927">
    <property type="entry name" value="FAD-bd_FR_type"/>
</dbReference>
<dbReference type="InterPro" id="IPR001094">
    <property type="entry name" value="Flavdoxin-like"/>
</dbReference>
<dbReference type="InterPro" id="IPR008254">
    <property type="entry name" value="Flavodoxin/NO_synth"/>
</dbReference>
<dbReference type="InterPro" id="IPR001709">
    <property type="entry name" value="Flavoprot_Pyr_Nucl_cyt_Rdtase"/>
</dbReference>
<dbReference type="InterPro" id="IPR029039">
    <property type="entry name" value="Flavoprotein-like_sf"/>
</dbReference>
<dbReference type="InterPro" id="IPR039261">
    <property type="entry name" value="FNR_nucleotide-bd"/>
</dbReference>
<dbReference type="InterPro" id="IPR023173">
    <property type="entry name" value="NADPH_Cyt_P450_Rdtase_alpha"/>
</dbReference>
<dbReference type="InterPro" id="IPR028879">
    <property type="entry name" value="NDOR1"/>
</dbReference>
<dbReference type="InterPro" id="IPR001433">
    <property type="entry name" value="OxRdtase_FAD/NAD-bd"/>
</dbReference>
<dbReference type="InterPro" id="IPR017938">
    <property type="entry name" value="Riboflavin_synthase-like_b-brl"/>
</dbReference>
<dbReference type="PANTHER" id="PTHR19384:SF10">
    <property type="entry name" value="NADPH-DEPENDENT DIFLAVIN OXIDOREDUCTASE 1"/>
    <property type="match status" value="1"/>
</dbReference>
<dbReference type="PANTHER" id="PTHR19384">
    <property type="entry name" value="NITRIC OXIDE SYNTHASE-RELATED"/>
    <property type="match status" value="1"/>
</dbReference>
<dbReference type="Pfam" id="PF00667">
    <property type="entry name" value="FAD_binding_1"/>
    <property type="match status" value="1"/>
</dbReference>
<dbReference type="Pfam" id="PF00258">
    <property type="entry name" value="Flavodoxin_1"/>
    <property type="match status" value="1"/>
</dbReference>
<dbReference type="Pfam" id="PF00175">
    <property type="entry name" value="NAD_binding_1"/>
    <property type="match status" value="1"/>
</dbReference>
<dbReference type="PRINTS" id="PR00369">
    <property type="entry name" value="FLAVODOXIN"/>
</dbReference>
<dbReference type="PRINTS" id="PR00371">
    <property type="entry name" value="FPNCR"/>
</dbReference>
<dbReference type="SUPFAM" id="SSF52343">
    <property type="entry name" value="Ferredoxin reductase-like, C-terminal NADP-linked domain"/>
    <property type="match status" value="1"/>
</dbReference>
<dbReference type="SUPFAM" id="SSF52218">
    <property type="entry name" value="Flavoproteins"/>
    <property type="match status" value="1"/>
</dbReference>
<dbReference type="SUPFAM" id="SSF63380">
    <property type="entry name" value="Riboflavin synthase domain-like"/>
    <property type="match status" value="1"/>
</dbReference>
<dbReference type="PROSITE" id="PS51384">
    <property type="entry name" value="FAD_FR"/>
    <property type="match status" value="1"/>
</dbReference>
<dbReference type="PROSITE" id="PS50902">
    <property type="entry name" value="FLAVODOXIN_LIKE"/>
    <property type="match status" value="1"/>
</dbReference>
<comment type="function">
    <text evidence="1">NADPH-dependent reductase which is a central component of the cytosolic iron-sulfur (Fe-S) protein assembly (CIA) machinery. Transfers electrons from NADPH via its FAD and FMN prosthetic groups to the [2Fe-2S] cluster of DRE2, another key component of the CIA machinery. In turn, this reduced cluster provides electrons for assembly of cytosolic iron-sulfur cluster proteins. Positively controls H(2)O(2)-induced cell death.</text>
</comment>
<comment type="catalytic activity">
    <reaction evidence="1">
        <text>2 oxidized [2Fe-2S]-[protein] + NADPH = 2 reduced [2Fe-2S]-[protein] + NADP(+) + H(+)</text>
        <dbReference type="Rhea" id="RHEA:67716"/>
        <dbReference type="Rhea" id="RHEA-COMP:17327"/>
        <dbReference type="Rhea" id="RHEA-COMP:17328"/>
        <dbReference type="ChEBI" id="CHEBI:15378"/>
        <dbReference type="ChEBI" id="CHEBI:33737"/>
        <dbReference type="ChEBI" id="CHEBI:33738"/>
        <dbReference type="ChEBI" id="CHEBI:57783"/>
        <dbReference type="ChEBI" id="CHEBI:58349"/>
    </reaction>
    <physiologicalReaction direction="left-to-right" evidence="1">
        <dbReference type="Rhea" id="RHEA:67717"/>
    </physiologicalReaction>
</comment>
<comment type="cofactor">
    <cofactor evidence="1">
        <name>FAD</name>
        <dbReference type="ChEBI" id="CHEBI:57692"/>
    </cofactor>
</comment>
<comment type="cofactor">
    <cofactor evidence="1">
        <name>FMN</name>
        <dbReference type="ChEBI" id="CHEBI:58210"/>
    </cofactor>
</comment>
<comment type="subunit">
    <text evidence="1">Interacts with DRE2; as part of the cytosolic iron-sulfur (Fe-S) protein assembly (CIA) machinery.</text>
</comment>
<comment type="subcellular location">
    <subcellularLocation>
        <location evidence="1">Cytoplasm</location>
    </subcellularLocation>
    <subcellularLocation>
        <location evidence="1">Mitochondrion</location>
    </subcellularLocation>
    <text evidence="1">Relocalizes to mitochondria after H(2)O(2) exposure.</text>
</comment>
<comment type="similarity">
    <text evidence="1">Belongs to the NADPH-dependent diflavin oxidoreductase NDOR1 family.</text>
</comment>
<comment type="similarity">
    <text evidence="1">In the N-terminal section; belongs to the flavodoxin family.</text>
</comment>
<comment type="similarity">
    <text evidence="1">In the C-terminal section; belongs to the flavoprotein pyridine nucleotide cytochrome reductase family.</text>
</comment>
<evidence type="ECO:0000255" key="1">
    <source>
        <dbReference type="HAMAP-Rule" id="MF_03178"/>
    </source>
</evidence>
<accession>Q6CVG8</accession>
<organism>
    <name type="scientific">Kluyveromyces lactis (strain ATCC 8585 / CBS 2359 / DSM 70799 / NBRC 1267 / NRRL Y-1140 / WM37)</name>
    <name type="common">Yeast</name>
    <name type="synonym">Candida sphaerica</name>
    <dbReference type="NCBI Taxonomy" id="284590"/>
    <lineage>
        <taxon>Eukaryota</taxon>
        <taxon>Fungi</taxon>
        <taxon>Dikarya</taxon>
        <taxon>Ascomycota</taxon>
        <taxon>Saccharomycotina</taxon>
        <taxon>Saccharomycetes</taxon>
        <taxon>Saccharomycetales</taxon>
        <taxon>Saccharomycetaceae</taxon>
        <taxon>Kluyveromyces</taxon>
    </lineage>
</organism>